<proteinExistence type="inferred from homology"/>
<feature type="chain" id="PRO_0000242792" description="Thymidine kinase">
    <location>
        <begin position="1"/>
        <end position="193"/>
    </location>
</feature>
<feature type="active site" description="Proton acceptor" evidence="1">
    <location>
        <position position="88"/>
    </location>
</feature>
<feature type="binding site" evidence="1">
    <location>
        <begin position="9"/>
        <end position="16"/>
    </location>
    <ligand>
        <name>ATP</name>
        <dbReference type="ChEBI" id="CHEBI:30616"/>
    </ligand>
</feature>
<feature type="binding site" evidence="1">
    <location>
        <begin position="87"/>
        <end position="90"/>
    </location>
    <ligand>
        <name>ATP</name>
        <dbReference type="ChEBI" id="CHEBI:30616"/>
    </ligand>
</feature>
<feature type="binding site" evidence="1">
    <location>
        <position position="145"/>
    </location>
    <ligand>
        <name>Zn(2+)</name>
        <dbReference type="ChEBI" id="CHEBI:29105"/>
    </ligand>
</feature>
<feature type="binding site" evidence="1">
    <location>
        <position position="147"/>
    </location>
    <ligand>
        <name>Zn(2+)</name>
        <dbReference type="ChEBI" id="CHEBI:29105"/>
    </ligand>
</feature>
<feature type="binding site" evidence="1">
    <location>
        <position position="182"/>
    </location>
    <ligand>
        <name>Zn(2+)</name>
        <dbReference type="ChEBI" id="CHEBI:29105"/>
    </ligand>
</feature>
<feature type="binding site" evidence="1">
    <location>
        <position position="185"/>
    </location>
    <ligand>
        <name>Zn(2+)</name>
        <dbReference type="ChEBI" id="CHEBI:29105"/>
    </ligand>
</feature>
<gene>
    <name evidence="1" type="primary">tdk</name>
    <name type="ordered locus">NTHI0655</name>
</gene>
<name>KITH_HAEI8</name>
<sequence>MAKLYFYYSTMNAGKSTTLLQSSYNYRERDMSTLVYTAAIDDRFGVGKVTSRIGISQDAFLFRSETNLFDEINEHLKKEKVHCVLVDEAQFLSKQQVYQLSDVVDKLKIPVLCYGLRTDFQAELFEGSKYLLAWADQLEELKTICYCGRKANFVLRLNDQGEVIKEGAQIQIGGNDSYLSVCRLHYKEKCGQI</sequence>
<comment type="catalytic activity">
    <reaction evidence="1">
        <text>thymidine + ATP = dTMP + ADP + H(+)</text>
        <dbReference type="Rhea" id="RHEA:19129"/>
        <dbReference type="ChEBI" id="CHEBI:15378"/>
        <dbReference type="ChEBI" id="CHEBI:17748"/>
        <dbReference type="ChEBI" id="CHEBI:30616"/>
        <dbReference type="ChEBI" id="CHEBI:63528"/>
        <dbReference type="ChEBI" id="CHEBI:456216"/>
        <dbReference type="EC" id="2.7.1.21"/>
    </reaction>
</comment>
<comment type="subunit">
    <text evidence="1">Homotetramer.</text>
</comment>
<comment type="subcellular location">
    <subcellularLocation>
        <location evidence="1">Cytoplasm</location>
    </subcellularLocation>
</comment>
<comment type="similarity">
    <text evidence="1">Belongs to the thymidine kinase family.</text>
</comment>
<accession>Q4QN19</accession>
<protein>
    <recommendedName>
        <fullName evidence="1">Thymidine kinase</fullName>
        <ecNumber evidence="1">2.7.1.21</ecNumber>
    </recommendedName>
</protein>
<keyword id="KW-0067">ATP-binding</keyword>
<keyword id="KW-0963">Cytoplasm</keyword>
<keyword id="KW-0237">DNA synthesis</keyword>
<keyword id="KW-0418">Kinase</keyword>
<keyword id="KW-0479">Metal-binding</keyword>
<keyword id="KW-0547">Nucleotide-binding</keyword>
<keyword id="KW-0808">Transferase</keyword>
<keyword id="KW-0862">Zinc</keyword>
<organism>
    <name type="scientific">Haemophilus influenzae (strain 86-028NP)</name>
    <dbReference type="NCBI Taxonomy" id="281310"/>
    <lineage>
        <taxon>Bacteria</taxon>
        <taxon>Pseudomonadati</taxon>
        <taxon>Pseudomonadota</taxon>
        <taxon>Gammaproteobacteria</taxon>
        <taxon>Pasteurellales</taxon>
        <taxon>Pasteurellaceae</taxon>
        <taxon>Haemophilus</taxon>
    </lineage>
</organism>
<reference key="1">
    <citation type="journal article" date="2005" name="J. Bacteriol.">
        <title>Genomic sequence of an otitis media isolate of nontypeable Haemophilus influenzae: comparative study with H. influenzae serotype d, strain KW20.</title>
        <authorList>
            <person name="Harrison A."/>
            <person name="Dyer D.W."/>
            <person name="Gillaspy A."/>
            <person name="Ray W.C."/>
            <person name="Mungur R."/>
            <person name="Carson M.B."/>
            <person name="Zhong H."/>
            <person name="Gipson J."/>
            <person name="Gipson M."/>
            <person name="Johnson L.S."/>
            <person name="Lewis L."/>
            <person name="Bakaletz L.O."/>
            <person name="Munson R.S. Jr."/>
        </authorList>
    </citation>
    <scope>NUCLEOTIDE SEQUENCE [LARGE SCALE GENOMIC DNA]</scope>
    <source>
        <strain>86-028NP</strain>
    </source>
</reference>
<dbReference type="EC" id="2.7.1.21" evidence="1"/>
<dbReference type="EMBL" id="CP000057">
    <property type="protein sequence ID" value="AAX87578.1"/>
    <property type="molecule type" value="Genomic_DNA"/>
</dbReference>
<dbReference type="RefSeq" id="WP_005651950.1">
    <property type="nucleotide sequence ID" value="NC_007146.2"/>
</dbReference>
<dbReference type="SMR" id="Q4QN19"/>
<dbReference type="GeneID" id="93219538"/>
<dbReference type="KEGG" id="hit:NTHI0655"/>
<dbReference type="HOGENOM" id="CLU_064400_2_1_6"/>
<dbReference type="Proteomes" id="UP000002525">
    <property type="component" value="Chromosome"/>
</dbReference>
<dbReference type="GO" id="GO:0005829">
    <property type="term" value="C:cytosol"/>
    <property type="evidence" value="ECO:0007669"/>
    <property type="project" value="TreeGrafter"/>
</dbReference>
<dbReference type="GO" id="GO:0005524">
    <property type="term" value="F:ATP binding"/>
    <property type="evidence" value="ECO:0007669"/>
    <property type="project" value="UniProtKB-UniRule"/>
</dbReference>
<dbReference type="GO" id="GO:0004797">
    <property type="term" value="F:thymidine kinase activity"/>
    <property type="evidence" value="ECO:0007669"/>
    <property type="project" value="UniProtKB-UniRule"/>
</dbReference>
<dbReference type="GO" id="GO:0008270">
    <property type="term" value="F:zinc ion binding"/>
    <property type="evidence" value="ECO:0007669"/>
    <property type="project" value="UniProtKB-UniRule"/>
</dbReference>
<dbReference type="GO" id="GO:0071897">
    <property type="term" value="P:DNA biosynthetic process"/>
    <property type="evidence" value="ECO:0007669"/>
    <property type="project" value="UniProtKB-KW"/>
</dbReference>
<dbReference type="GO" id="GO:0046104">
    <property type="term" value="P:thymidine metabolic process"/>
    <property type="evidence" value="ECO:0007669"/>
    <property type="project" value="TreeGrafter"/>
</dbReference>
<dbReference type="FunFam" id="3.30.60.20:FF:000074">
    <property type="entry name" value="Thymidine kinase"/>
    <property type="match status" value="1"/>
</dbReference>
<dbReference type="FunFam" id="3.40.50.300:FF:000323">
    <property type="entry name" value="Thymidine kinase"/>
    <property type="match status" value="1"/>
</dbReference>
<dbReference type="Gene3D" id="3.30.60.20">
    <property type="match status" value="1"/>
</dbReference>
<dbReference type="Gene3D" id="3.40.50.300">
    <property type="entry name" value="P-loop containing nucleotide triphosphate hydrolases"/>
    <property type="match status" value="1"/>
</dbReference>
<dbReference type="HAMAP" id="MF_00124">
    <property type="entry name" value="Thymidine_kinase"/>
    <property type="match status" value="1"/>
</dbReference>
<dbReference type="InterPro" id="IPR027417">
    <property type="entry name" value="P-loop_NTPase"/>
</dbReference>
<dbReference type="InterPro" id="IPR001267">
    <property type="entry name" value="Thymidine_kinase"/>
</dbReference>
<dbReference type="InterPro" id="IPR020633">
    <property type="entry name" value="Thymidine_kinase_CS"/>
</dbReference>
<dbReference type="NCBIfam" id="NF003300">
    <property type="entry name" value="PRK04296.1-5"/>
    <property type="match status" value="1"/>
</dbReference>
<dbReference type="PANTHER" id="PTHR11441">
    <property type="entry name" value="THYMIDINE KINASE"/>
    <property type="match status" value="1"/>
</dbReference>
<dbReference type="PANTHER" id="PTHR11441:SF0">
    <property type="entry name" value="THYMIDINE KINASE, CYTOSOLIC"/>
    <property type="match status" value="1"/>
</dbReference>
<dbReference type="Pfam" id="PF00265">
    <property type="entry name" value="TK"/>
    <property type="match status" value="1"/>
</dbReference>
<dbReference type="PIRSF" id="PIRSF035805">
    <property type="entry name" value="TK_cell"/>
    <property type="match status" value="1"/>
</dbReference>
<dbReference type="SUPFAM" id="SSF57716">
    <property type="entry name" value="Glucocorticoid receptor-like (DNA-binding domain)"/>
    <property type="match status" value="1"/>
</dbReference>
<dbReference type="SUPFAM" id="SSF52540">
    <property type="entry name" value="P-loop containing nucleoside triphosphate hydrolases"/>
    <property type="match status" value="1"/>
</dbReference>
<dbReference type="PROSITE" id="PS00603">
    <property type="entry name" value="TK_CELLULAR_TYPE"/>
    <property type="match status" value="1"/>
</dbReference>
<evidence type="ECO:0000255" key="1">
    <source>
        <dbReference type="HAMAP-Rule" id="MF_00124"/>
    </source>
</evidence>